<comment type="function">
    <text evidence="1">Binds directly to 16S ribosomal RNA.</text>
</comment>
<comment type="similarity">
    <text evidence="1">Belongs to the bacterial ribosomal protein bS20 family.</text>
</comment>
<dbReference type="EMBL" id="CP000705">
    <property type="protein sequence ID" value="ABQ82912.1"/>
    <property type="molecule type" value="Genomic_DNA"/>
</dbReference>
<dbReference type="RefSeq" id="WP_003666832.1">
    <property type="nucleotide sequence ID" value="NZ_AZDD01000002.1"/>
</dbReference>
<dbReference type="SMR" id="A5VJ88"/>
<dbReference type="STRING" id="557436.Lreu_0647"/>
<dbReference type="GeneID" id="77190806"/>
<dbReference type="KEGG" id="lre:Lreu_0647"/>
<dbReference type="PATRIC" id="fig|557436.17.peg.719"/>
<dbReference type="eggNOG" id="COG0268">
    <property type="taxonomic scope" value="Bacteria"/>
</dbReference>
<dbReference type="HOGENOM" id="CLU_160655_1_1_9"/>
<dbReference type="OMA" id="GVIHKNA"/>
<dbReference type="Proteomes" id="UP000001991">
    <property type="component" value="Chromosome"/>
</dbReference>
<dbReference type="GO" id="GO:0005829">
    <property type="term" value="C:cytosol"/>
    <property type="evidence" value="ECO:0007669"/>
    <property type="project" value="TreeGrafter"/>
</dbReference>
<dbReference type="GO" id="GO:0015935">
    <property type="term" value="C:small ribosomal subunit"/>
    <property type="evidence" value="ECO:0007669"/>
    <property type="project" value="TreeGrafter"/>
</dbReference>
<dbReference type="GO" id="GO:0070181">
    <property type="term" value="F:small ribosomal subunit rRNA binding"/>
    <property type="evidence" value="ECO:0007669"/>
    <property type="project" value="TreeGrafter"/>
</dbReference>
<dbReference type="GO" id="GO:0003735">
    <property type="term" value="F:structural constituent of ribosome"/>
    <property type="evidence" value="ECO:0007669"/>
    <property type="project" value="InterPro"/>
</dbReference>
<dbReference type="GO" id="GO:0006412">
    <property type="term" value="P:translation"/>
    <property type="evidence" value="ECO:0007669"/>
    <property type="project" value="UniProtKB-UniRule"/>
</dbReference>
<dbReference type="Gene3D" id="1.20.58.110">
    <property type="entry name" value="Ribosomal protein S20"/>
    <property type="match status" value="1"/>
</dbReference>
<dbReference type="HAMAP" id="MF_00500">
    <property type="entry name" value="Ribosomal_bS20"/>
    <property type="match status" value="1"/>
</dbReference>
<dbReference type="InterPro" id="IPR002583">
    <property type="entry name" value="Ribosomal_bS20"/>
</dbReference>
<dbReference type="InterPro" id="IPR036510">
    <property type="entry name" value="Ribosomal_bS20_sf"/>
</dbReference>
<dbReference type="NCBIfam" id="TIGR00029">
    <property type="entry name" value="S20"/>
    <property type="match status" value="1"/>
</dbReference>
<dbReference type="PANTHER" id="PTHR33398">
    <property type="entry name" value="30S RIBOSOMAL PROTEIN S20"/>
    <property type="match status" value="1"/>
</dbReference>
<dbReference type="PANTHER" id="PTHR33398:SF1">
    <property type="entry name" value="SMALL RIBOSOMAL SUBUNIT PROTEIN BS20C"/>
    <property type="match status" value="1"/>
</dbReference>
<dbReference type="Pfam" id="PF01649">
    <property type="entry name" value="Ribosomal_S20p"/>
    <property type="match status" value="1"/>
</dbReference>
<dbReference type="SUPFAM" id="SSF46992">
    <property type="entry name" value="Ribosomal protein S20"/>
    <property type="match status" value="1"/>
</dbReference>
<feature type="chain" id="PRO_1000126467" description="Small ribosomal subunit protein bS20">
    <location>
        <begin position="1"/>
        <end position="84"/>
    </location>
</feature>
<proteinExistence type="inferred from homology"/>
<organism>
    <name type="scientific">Limosilactobacillus reuteri (strain DSM 20016)</name>
    <name type="common">Lactobacillus reuteri</name>
    <dbReference type="NCBI Taxonomy" id="557436"/>
    <lineage>
        <taxon>Bacteria</taxon>
        <taxon>Bacillati</taxon>
        <taxon>Bacillota</taxon>
        <taxon>Bacilli</taxon>
        <taxon>Lactobacillales</taxon>
        <taxon>Lactobacillaceae</taxon>
        <taxon>Limosilactobacillus</taxon>
    </lineage>
</organism>
<gene>
    <name evidence="1" type="primary">rpsT</name>
    <name type="ordered locus">Lreu_0647</name>
</gene>
<name>RS20_LIMRD</name>
<accession>A5VJ88</accession>
<sequence>MPIIKSAIERVRTSEKAEARNASQLSQMRTAIKKFDKAKLAGADNLDDLYKAAISAIDRAHSKGLIKANKAARDKSRLSARYAK</sequence>
<protein>
    <recommendedName>
        <fullName evidence="1">Small ribosomal subunit protein bS20</fullName>
    </recommendedName>
    <alternativeName>
        <fullName evidence="2">30S ribosomal protein S20</fullName>
    </alternativeName>
</protein>
<keyword id="KW-1185">Reference proteome</keyword>
<keyword id="KW-0687">Ribonucleoprotein</keyword>
<keyword id="KW-0689">Ribosomal protein</keyword>
<keyword id="KW-0694">RNA-binding</keyword>
<keyword id="KW-0699">rRNA-binding</keyword>
<reference key="1">
    <citation type="journal article" date="2011" name="PLoS Genet.">
        <title>The evolution of host specialization in the vertebrate gut symbiont Lactobacillus reuteri.</title>
        <authorList>
            <person name="Frese S.A."/>
            <person name="Benson A.K."/>
            <person name="Tannock G.W."/>
            <person name="Loach D.M."/>
            <person name="Kim J."/>
            <person name="Zhang M."/>
            <person name="Oh P.L."/>
            <person name="Heng N.C."/>
            <person name="Patil P.B."/>
            <person name="Juge N."/>
            <person name="Mackenzie D.A."/>
            <person name="Pearson B.M."/>
            <person name="Lapidus A."/>
            <person name="Dalin E."/>
            <person name="Tice H."/>
            <person name="Goltsman E."/>
            <person name="Land M."/>
            <person name="Hauser L."/>
            <person name="Ivanova N."/>
            <person name="Kyrpides N.C."/>
            <person name="Walter J."/>
        </authorList>
    </citation>
    <scope>NUCLEOTIDE SEQUENCE [LARGE SCALE GENOMIC DNA]</scope>
    <source>
        <strain>DSM 20016</strain>
    </source>
</reference>
<evidence type="ECO:0000255" key="1">
    <source>
        <dbReference type="HAMAP-Rule" id="MF_00500"/>
    </source>
</evidence>
<evidence type="ECO:0000305" key="2"/>